<gene>
    <name type="ordered locus">CC_3319</name>
</gene>
<comment type="similarity">
    <text evidence="1">Belongs to the UPF0335 family.</text>
</comment>
<dbReference type="EMBL" id="AE005673">
    <property type="protein sequence ID" value="AAK25281.1"/>
    <property type="molecule type" value="Genomic_DNA"/>
</dbReference>
<dbReference type="PIR" id="E87660">
    <property type="entry name" value="E87660"/>
</dbReference>
<dbReference type="RefSeq" id="NP_422113.1">
    <property type="nucleotide sequence ID" value="NC_002696.2"/>
</dbReference>
<dbReference type="RefSeq" id="WP_010921151.1">
    <property type="nucleotide sequence ID" value="NC_002696.2"/>
</dbReference>
<dbReference type="PDB" id="6OZX">
    <property type="method" value="X-ray"/>
    <property type="resolution" value="1.85 A"/>
    <property type="chains" value="A=1-89"/>
</dbReference>
<dbReference type="PDB" id="6OZY">
    <property type="method" value="X-ray"/>
    <property type="resolution" value="2.01 A"/>
    <property type="chains" value="A/B=1-89"/>
</dbReference>
<dbReference type="PDB" id="6OZZ">
    <property type="method" value="X-ray"/>
    <property type="resolution" value="3.30 A"/>
    <property type="chains" value="A/B/C/D/E/F=12-89"/>
</dbReference>
<dbReference type="PDBsum" id="6OZX"/>
<dbReference type="PDBsum" id="6OZY"/>
<dbReference type="PDBsum" id="6OZZ"/>
<dbReference type="SMR" id="Q9A385"/>
<dbReference type="STRING" id="190650.CC_3319"/>
<dbReference type="EnsemblBacteria" id="AAK25281">
    <property type="protein sequence ID" value="AAK25281"/>
    <property type="gene ID" value="CC_3319"/>
</dbReference>
<dbReference type="KEGG" id="ccr:CC_3319"/>
<dbReference type="PATRIC" id="fig|190650.5.peg.3326"/>
<dbReference type="eggNOG" id="COG3750">
    <property type="taxonomic scope" value="Bacteria"/>
</dbReference>
<dbReference type="HOGENOM" id="CLU_158651_3_0_5"/>
<dbReference type="BioCyc" id="CAULO:CC3319-MONOMER"/>
<dbReference type="Proteomes" id="UP000001816">
    <property type="component" value="Chromosome"/>
</dbReference>
<dbReference type="GO" id="GO:0003677">
    <property type="term" value="F:DNA binding"/>
    <property type="evidence" value="ECO:0007669"/>
    <property type="project" value="InterPro"/>
</dbReference>
<dbReference type="HAMAP" id="MF_00797">
    <property type="entry name" value="UPF0335"/>
    <property type="match status" value="1"/>
</dbReference>
<dbReference type="InterPro" id="IPR018753">
    <property type="entry name" value="GapR-like"/>
</dbReference>
<dbReference type="InterPro" id="IPR046367">
    <property type="entry name" value="GapR-like_DNA-bd"/>
</dbReference>
<dbReference type="NCBIfam" id="NF010247">
    <property type="entry name" value="PRK13694.1"/>
    <property type="match status" value="1"/>
</dbReference>
<dbReference type="Pfam" id="PF10073">
    <property type="entry name" value="GapR_DNA-bd"/>
    <property type="match status" value="1"/>
</dbReference>
<accession>Q9A385</accession>
<evidence type="ECO:0000255" key="1">
    <source>
        <dbReference type="HAMAP-Rule" id="MF_00797"/>
    </source>
</evidence>
<evidence type="ECO:0007829" key="2">
    <source>
        <dbReference type="PDB" id="6OZX"/>
    </source>
</evidence>
<organism>
    <name type="scientific">Caulobacter vibrioides (strain ATCC 19089 / CIP 103742 / CB 15)</name>
    <name type="common">Caulobacter crescentus</name>
    <dbReference type="NCBI Taxonomy" id="190650"/>
    <lineage>
        <taxon>Bacteria</taxon>
        <taxon>Pseudomonadati</taxon>
        <taxon>Pseudomonadota</taxon>
        <taxon>Alphaproteobacteria</taxon>
        <taxon>Caulobacterales</taxon>
        <taxon>Caulobacteraceae</taxon>
        <taxon>Caulobacter</taxon>
    </lineage>
</organism>
<name>Y3319_CAUVC</name>
<keyword id="KW-0002">3D-structure</keyword>
<keyword id="KW-1185">Reference proteome</keyword>
<protein>
    <recommendedName>
        <fullName evidence="1">UPF0335 protein CC_3319</fullName>
    </recommendedName>
</protein>
<feature type="chain" id="PRO_0000219926" description="UPF0335 protein CC_3319">
    <location>
        <begin position="1"/>
        <end position="89"/>
    </location>
</feature>
<feature type="helix" evidence="2">
    <location>
        <begin position="14"/>
        <end position="50"/>
    </location>
</feature>
<feature type="helix" evidence="2">
    <location>
        <begin position="55"/>
        <end position="64"/>
    </location>
</feature>
<feature type="helix" evidence="2">
    <location>
        <begin position="69"/>
        <end position="85"/>
    </location>
</feature>
<reference key="1">
    <citation type="journal article" date="2001" name="Proc. Natl. Acad. Sci. U.S.A.">
        <title>Complete genome sequence of Caulobacter crescentus.</title>
        <authorList>
            <person name="Nierman W.C."/>
            <person name="Feldblyum T.V."/>
            <person name="Laub M.T."/>
            <person name="Paulsen I.T."/>
            <person name="Nelson K.E."/>
            <person name="Eisen J.A."/>
            <person name="Heidelberg J.F."/>
            <person name="Alley M.R.K."/>
            <person name="Ohta N."/>
            <person name="Maddock J.R."/>
            <person name="Potocka I."/>
            <person name="Nelson W.C."/>
            <person name="Newton A."/>
            <person name="Stephens C."/>
            <person name="Phadke N.D."/>
            <person name="Ely B."/>
            <person name="DeBoy R.T."/>
            <person name="Dodson R.J."/>
            <person name="Durkin A.S."/>
            <person name="Gwinn M.L."/>
            <person name="Haft D.H."/>
            <person name="Kolonay J.F."/>
            <person name="Smit J."/>
            <person name="Craven M.B."/>
            <person name="Khouri H.M."/>
            <person name="Shetty J."/>
            <person name="Berry K.J."/>
            <person name="Utterback T.R."/>
            <person name="Tran K."/>
            <person name="Wolf A.M."/>
            <person name="Vamathevan J.J."/>
            <person name="Ermolaeva M.D."/>
            <person name="White O."/>
            <person name="Salzberg S.L."/>
            <person name="Venter J.C."/>
            <person name="Shapiro L."/>
            <person name="Fraser C.M."/>
        </authorList>
    </citation>
    <scope>NUCLEOTIDE SEQUENCE [LARGE SCALE GENOMIC DNA]</scope>
    <source>
        <strain>ATCC 19089 / CIP 103742 / CB 15</strain>
    </source>
</reference>
<proteinExistence type="evidence at protein level"/>
<sequence length="89" mass="10109">MADDAIPHTDVLNSTAQGQLKSIIERVERLEVEKAEIMEQIKEVYAEAKGNGFDVKVLKKVVRIRKQDRAKRQEEDAILDLYLSAIGEI</sequence>